<accession>O62680</accession>
<accession>Q9TR76</accession>
<accession>Q9XT94</accession>
<sequence length="123" mass="13790">MGSKGGFILLWLLSILAVLCHLGHSLQCYNCINPAGSCTTAMNCSHNQDACIFVEAVPPKTYYQCWRFDECNFDFISRNLAEKKLKYNCCRKDLCNKSDATISSGKTALLVILLLVATWHFCL</sequence>
<keyword id="KW-1003">Cell membrane</keyword>
<keyword id="KW-0903">Direct protein sequencing</keyword>
<keyword id="KW-1015">Disulfide bond</keyword>
<keyword id="KW-0325">Glycoprotein</keyword>
<keyword id="KW-0336">GPI-anchor</keyword>
<keyword id="KW-0449">Lipoprotein</keyword>
<keyword id="KW-0472">Membrane</keyword>
<keyword id="KW-1185">Reference proteome</keyword>
<keyword id="KW-0964">Secreted</keyword>
<keyword id="KW-0732">Signal</keyword>
<organism>
    <name type="scientific">Sus scrofa</name>
    <name type="common">Pig</name>
    <dbReference type="NCBI Taxonomy" id="9823"/>
    <lineage>
        <taxon>Eukaryota</taxon>
        <taxon>Metazoa</taxon>
        <taxon>Chordata</taxon>
        <taxon>Craniata</taxon>
        <taxon>Vertebrata</taxon>
        <taxon>Euteleostomi</taxon>
        <taxon>Mammalia</taxon>
        <taxon>Eutheria</taxon>
        <taxon>Laurasiatheria</taxon>
        <taxon>Artiodactyla</taxon>
        <taxon>Suina</taxon>
        <taxon>Suidae</taxon>
        <taxon>Sus</taxon>
    </lineage>
</organism>
<protein>
    <recommendedName>
        <fullName>CD59 glycoprotein</fullName>
    </recommendedName>
    <alternativeName>
        <fullName>MAC-inhibitory protein</fullName>
        <shortName>MAC-IP</shortName>
    </alternativeName>
    <alternativeName>
        <fullName>Membrane attack complex inhibition factor</fullName>
        <shortName>MACIF</shortName>
    </alternativeName>
    <alternativeName>
        <fullName>Protectin</fullName>
    </alternativeName>
    <cdAntigenName>CD59</cdAntigenName>
</protein>
<name>CD59_PIG</name>
<dbReference type="EMBL" id="AF020302">
    <property type="protein sequence ID" value="AAC67231.1"/>
    <property type="molecule type" value="mRNA"/>
</dbReference>
<dbReference type="EMBL" id="AF058328">
    <property type="protein sequence ID" value="AAD39837.1"/>
    <property type="molecule type" value="mRNA"/>
</dbReference>
<dbReference type="RefSeq" id="NP_999335.1">
    <property type="nucleotide sequence ID" value="NM_214170.1"/>
</dbReference>
<dbReference type="RefSeq" id="XP_005661088.1">
    <property type="nucleotide sequence ID" value="XM_005661031.3"/>
</dbReference>
<dbReference type="SMR" id="O62680"/>
<dbReference type="FunCoup" id="O62680">
    <property type="interactions" value="135"/>
</dbReference>
<dbReference type="STRING" id="9823.ENSSSCP00000025898"/>
<dbReference type="GlyCosmos" id="O62680">
    <property type="glycosylation" value="1 site, No reported glycans"/>
</dbReference>
<dbReference type="GlyGen" id="O62680">
    <property type="glycosylation" value="1 site"/>
</dbReference>
<dbReference type="PaxDb" id="9823-ENSSSCP00000025898"/>
<dbReference type="PeptideAtlas" id="O62680"/>
<dbReference type="Ensembl" id="ENSSSCT00000026025.5">
    <property type="protein sequence ID" value="ENSSSCP00000025898.1"/>
    <property type="gene ID" value="ENSSSCG00000024791.5"/>
</dbReference>
<dbReference type="Ensembl" id="ENSSSCT00025025695.1">
    <property type="protein sequence ID" value="ENSSSCP00025010860.1"/>
    <property type="gene ID" value="ENSSSCG00025018939.1"/>
</dbReference>
<dbReference type="Ensembl" id="ENSSSCT00035072171.1">
    <property type="protein sequence ID" value="ENSSSCP00035029307.1"/>
    <property type="gene ID" value="ENSSSCG00035054075.1"/>
</dbReference>
<dbReference type="Ensembl" id="ENSSSCT00040084790.1">
    <property type="protein sequence ID" value="ENSSSCP00040037016.1"/>
    <property type="gene ID" value="ENSSSCG00040062263.1"/>
</dbReference>
<dbReference type="Ensembl" id="ENSSSCT00045057486.1">
    <property type="protein sequence ID" value="ENSSSCP00045040202.1"/>
    <property type="gene ID" value="ENSSSCG00045033618.1"/>
</dbReference>
<dbReference type="Ensembl" id="ENSSSCT00050052466.1">
    <property type="protein sequence ID" value="ENSSSCP00050022024.1"/>
    <property type="gene ID" value="ENSSSCG00050038907.1"/>
</dbReference>
<dbReference type="Ensembl" id="ENSSSCT00055025697.1">
    <property type="protein sequence ID" value="ENSSSCP00055020421.1"/>
    <property type="gene ID" value="ENSSSCG00055013062.1"/>
</dbReference>
<dbReference type="Ensembl" id="ENSSSCT00060042460.1">
    <property type="protein sequence ID" value="ENSSSCP00060018085.1"/>
    <property type="gene ID" value="ENSSSCG00060031379.1"/>
</dbReference>
<dbReference type="Ensembl" id="ENSSSCT00065038021.1">
    <property type="protein sequence ID" value="ENSSSCP00065016037.1"/>
    <property type="gene ID" value="ENSSSCG00065028199.1"/>
</dbReference>
<dbReference type="Ensembl" id="ENSSSCT00090044952">
    <property type="protein sequence ID" value="ENSSSCP00090027814"/>
    <property type="gene ID" value="ENSSSCG00090025467"/>
</dbReference>
<dbReference type="Ensembl" id="ENSSSCT00105041881">
    <property type="protein sequence ID" value="ENSSSCP00105029189"/>
    <property type="gene ID" value="ENSSSCG00105021952"/>
</dbReference>
<dbReference type="Ensembl" id="ENSSSCT00110059842">
    <property type="protein sequence ID" value="ENSSSCP00110041800"/>
    <property type="gene ID" value="ENSSSCG00110031326"/>
</dbReference>
<dbReference type="Ensembl" id="ENSSSCT00115004813">
    <property type="protein sequence ID" value="ENSSSCP00115004453"/>
    <property type="gene ID" value="ENSSSCG00115002890"/>
</dbReference>
<dbReference type="Ensembl" id="ENSSSCT00130025204">
    <property type="protein sequence ID" value="ENSSSCP00130028930"/>
    <property type="gene ID" value="ENSSSCG00130021201"/>
</dbReference>
<dbReference type="GeneID" id="397347"/>
<dbReference type="KEGG" id="ssc:397347"/>
<dbReference type="CTD" id="966"/>
<dbReference type="VGNC" id="VGNC:99615">
    <property type="gene designation" value="CD59"/>
</dbReference>
<dbReference type="eggNOG" id="ENOG502SA4P">
    <property type="taxonomic scope" value="Eukaryota"/>
</dbReference>
<dbReference type="GeneTree" id="ENSGT00390000016309"/>
<dbReference type="HOGENOM" id="CLU_147732_1_0_1"/>
<dbReference type="InParanoid" id="O62680"/>
<dbReference type="OMA" id="CEYSRLA"/>
<dbReference type="OrthoDB" id="10011411at2759"/>
<dbReference type="TreeFam" id="TF338524"/>
<dbReference type="Reactome" id="R-SSC-204005">
    <property type="pathway name" value="COPII-mediated vesicle transport"/>
</dbReference>
<dbReference type="Reactome" id="R-SSC-5694530">
    <property type="pathway name" value="Cargo concentration in the ER"/>
</dbReference>
<dbReference type="Reactome" id="R-SSC-6798695">
    <property type="pathway name" value="Neutrophil degranulation"/>
</dbReference>
<dbReference type="Reactome" id="R-SSC-6807878">
    <property type="pathway name" value="COPI-mediated anterograde transport"/>
</dbReference>
<dbReference type="Reactome" id="R-SSC-977606">
    <property type="pathway name" value="Regulation of Complement cascade"/>
</dbReference>
<dbReference type="Proteomes" id="UP000008227">
    <property type="component" value="Chromosome 2"/>
</dbReference>
<dbReference type="Proteomes" id="UP000314985">
    <property type="component" value="Unplaced"/>
</dbReference>
<dbReference type="Proteomes" id="UP000694570">
    <property type="component" value="Unplaced"/>
</dbReference>
<dbReference type="Proteomes" id="UP000694571">
    <property type="component" value="Unplaced"/>
</dbReference>
<dbReference type="Proteomes" id="UP000694720">
    <property type="component" value="Unplaced"/>
</dbReference>
<dbReference type="Proteomes" id="UP000694722">
    <property type="component" value="Unplaced"/>
</dbReference>
<dbReference type="Proteomes" id="UP000694723">
    <property type="component" value="Unplaced"/>
</dbReference>
<dbReference type="Proteomes" id="UP000694724">
    <property type="component" value="Unplaced"/>
</dbReference>
<dbReference type="Proteomes" id="UP000694725">
    <property type="component" value="Unplaced"/>
</dbReference>
<dbReference type="Proteomes" id="UP000694726">
    <property type="component" value="Unplaced"/>
</dbReference>
<dbReference type="Proteomes" id="UP000694727">
    <property type="component" value="Unplaced"/>
</dbReference>
<dbReference type="Proteomes" id="UP000694728">
    <property type="component" value="Unplaced"/>
</dbReference>
<dbReference type="Bgee" id="ENSSSCG00000024791">
    <property type="expression patterns" value="Expressed in endocardial endothelium and 43 other cell types or tissues"/>
</dbReference>
<dbReference type="GO" id="GO:0005886">
    <property type="term" value="C:plasma membrane"/>
    <property type="evidence" value="ECO:0000318"/>
    <property type="project" value="GO_Central"/>
</dbReference>
<dbReference type="GO" id="GO:0098552">
    <property type="term" value="C:side of membrane"/>
    <property type="evidence" value="ECO:0007669"/>
    <property type="project" value="UniProtKB-KW"/>
</dbReference>
<dbReference type="GO" id="GO:0001848">
    <property type="term" value="F:complement binding"/>
    <property type="evidence" value="ECO:0000318"/>
    <property type="project" value="GO_Central"/>
</dbReference>
<dbReference type="GO" id="GO:0045087">
    <property type="term" value="P:innate immune response"/>
    <property type="evidence" value="ECO:0000314"/>
    <property type="project" value="AgBase"/>
</dbReference>
<dbReference type="GO" id="GO:0001971">
    <property type="term" value="P:negative regulation of activation of membrane attack complex"/>
    <property type="evidence" value="ECO:0000318"/>
    <property type="project" value="GO_Central"/>
</dbReference>
<dbReference type="CDD" id="cd23554">
    <property type="entry name" value="TFP_LU_ECD_CD59"/>
    <property type="match status" value="1"/>
</dbReference>
<dbReference type="FunFam" id="2.10.60.10:FF:000023">
    <property type="entry name" value="CD59 glycoprotein preproprotein"/>
    <property type="match status" value="1"/>
</dbReference>
<dbReference type="Gene3D" id="2.10.60.10">
    <property type="entry name" value="CD59"/>
    <property type="match status" value="1"/>
</dbReference>
<dbReference type="InterPro" id="IPR056949">
    <property type="entry name" value="CD59"/>
</dbReference>
<dbReference type="InterPro" id="IPR018363">
    <property type="entry name" value="CD59_antigen_CS"/>
</dbReference>
<dbReference type="InterPro" id="IPR016054">
    <property type="entry name" value="LY6_UPA_recep-like"/>
</dbReference>
<dbReference type="InterPro" id="IPR045860">
    <property type="entry name" value="Snake_toxin-like_sf"/>
</dbReference>
<dbReference type="PANTHER" id="PTHR10036">
    <property type="entry name" value="CD59 GLYCOPROTEIN"/>
    <property type="match status" value="1"/>
</dbReference>
<dbReference type="PANTHER" id="PTHR10036:SF24">
    <property type="entry name" value="CD59 GLYCOPROTEIN"/>
    <property type="match status" value="1"/>
</dbReference>
<dbReference type="Pfam" id="PF25152">
    <property type="entry name" value="CD59"/>
    <property type="match status" value="1"/>
</dbReference>
<dbReference type="SMART" id="SM00134">
    <property type="entry name" value="LU"/>
    <property type="match status" value="1"/>
</dbReference>
<dbReference type="SUPFAM" id="SSF57302">
    <property type="entry name" value="Snake toxin-like"/>
    <property type="match status" value="1"/>
</dbReference>
<dbReference type="PROSITE" id="PS00983">
    <property type="entry name" value="LY6_UPAR"/>
    <property type="match status" value="1"/>
</dbReference>
<evidence type="ECO:0000250" key="1">
    <source>
        <dbReference type="UniProtKB" id="P13987"/>
    </source>
</evidence>
<evidence type="ECO:0000255" key="2"/>
<evidence type="ECO:0000269" key="3">
    <source>
    </source>
</evidence>
<evidence type="ECO:0000269" key="4">
    <source>
    </source>
</evidence>
<evidence type="ECO:0000269" key="5">
    <source>
    </source>
</evidence>
<evidence type="ECO:0000303" key="6">
    <source>
    </source>
</evidence>
<evidence type="ECO:0000305" key="7"/>
<proteinExistence type="evidence at protein level"/>
<feature type="signal peptide" evidence="3">
    <location>
        <begin position="1"/>
        <end position="25"/>
    </location>
</feature>
<feature type="chain" id="PRO_0000036118" description="CD59 glycoprotein">
    <location>
        <begin position="26"/>
        <end position="98"/>
    </location>
</feature>
<feature type="propeptide" id="PRO_0000036119" description="Removed in mature form" evidence="1">
    <location>
        <begin position="99"/>
        <end position="123"/>
    </location>
</feature>
<feature type="domain" description="UPAR/Ly6">
    <location>
        <begin position="26"/>
        <end position="103"/>
    </location>
</feature>
<feature type="lipid moiety-binding region" description="GPI-anchor amidated serine" evidence="1">
    <location>
        <position position="98"/>
    </location>
</feature>
<feature type="glycosylation site" description="N-linked (GlcNAc...) asparagine" evidence="2">
    <location>
        <position position="43"/>
    </location>
</feature>
<feature type="disulfide bond" evidence="1">
    <location>
        <begin position="28"/>
        <end position="51"/>
    </location>
</feature>
<feature type="disulfide bond" evidence="1">
    <location>
        <begin position="31"/>
        <end position="38"/>
    </location>
</feature>
<feature type="disulfide bond" evidence="1">
    <location>
        <begin position="44"/>
        <end position="65"/>
    </location>
</feature>
<feature type="disulfide bond" evidence="1">
    <location>
        <begin position="71"/>
        <end position="89"/>
    </location>
</feature>
<feature type="disulfide bond" evidence="1">
    <location>
        <begin position="90"/>
        <end position="95"/>
    </location>
</feature>
<feature type="sequence conflict" description="In Ref. 2; AAD39837." evidence="7" ref="2">
    <original>L</original>
    <variation>M</variation>
    <location>
        <position position="26"/>
    </location>
</feature>
<feature type="sequence conflict" description="In Ref. 3; AA sequence." evidence="7" ref="3">
    <original>H</original>
    <variation>Y</variation>
    <location>
        <position position="46"/>
    </location>
</feature>
<feature type="sequence conflict" description="In Ref. 3; AA sequence." evidence="7" ref="3">
    <location>
        <position position="63"/>
    </location>
</feature>
<reference key="1">
    <citation type="journal article" date="1998" name="J. Immunol.">
        <title>Molecular cloning and functional characterization of the pig analogue of CD59: relevance to xenotransplantation.</title>
        <authorList>
            <person name="Hinchliffe S.J."/>
            <person name="Rushmere N.K."/>
            <person name="Hanna S.M."/>
            <person name="Morgan B.P."/>
        </authorList>
    </citation>
    <scope>NUCLEOTIDE SEQUENCE [MRNA]</scope>
    <scope>FUNCTION</scope>
    <scope>TISSUE SPECIFICITY</scope>
    <source>
        <tissue>Aortic endothelium</tissue>
    </source>
</reference>
<reference key="2">
    <citation type="journal article" date="1998" name="Transplantation">
        <title>Structure/function characterization of porcine CD59: expression, chromosomal mapping, complement-inhibition, and costimulatory activity.</title>
        <authorList>
            <person name="Maher S.E."/>
            <person name="Pflugh D.L."/>
            <person name="Larsen N.J."/>
            <person name="Rothschild M.F."/>
            <person name="Bothwell A.L.M."/>
        </authorList>
    </citation>
    <scope>NUCLEOTIDE SEQUENCE [MRNA] OF 26-123</scope>
    <scope>FUNCTION</scope>
    <source>
        <tissue>Aortic endothelium</tissue>
    </source>
</reference>
<reference key="3">
    <citation type="journal article" date="1995" name="J. Immunol. Methods">
        <title>A rapid method for the isolation of analogues of human CD59 by preparative SDS-PAGE: application to pig CD59.</title>
        <authorList>
            <person name="van den Berg C.W."/>
            <person name="Harrison R.A."/>
            <person name="Morgan B.P."/>
        </authorList>
    </citation>
    <scope>PROTEIN SEQUENCE OF 26-64</scope>
    <source>
        <tissue>Erythrocyte</tissue>
    </source>
</reference>
<gene>
    <name evidence="6" type="primary">CD59</name>
</gene>
<comment type="function">
    <text evidence="1 4 5">Potent inhibitor of the complement membrane attack complex (MAC) action, which protects self-cells from damage during complement activation (PubMed:9558099, PubMed:9808497). Acts by binding to the beta-haipins of C8 (C8A and C8B) components of the assembling MAC, forming an intermolecular beta-sheet that prevents incorporation of the multiple copies of C9 required for complete formation of the osmolytic pore (By similarity).</text>
</comment>
<comment type="subunit">
    <text evidence="1">Interacts with T-cell surface antigen CD2.</text>
</comment>
<comment type="subcellular location">
    <subcellularLocation>
        <location evidence="1">Cell membrane</location>
        <topology evidence="1">Lipid-anchor</topology>
        <topology evidence="1">GPI-anchor</topology>
    </subcellularLocation>
    <subcellularLocation>
        <location evidence="1">Secreted</location>
    </subcellularLocation>
    <text evidence="1">Localizes to the cell surface. Soluble form found in a number of tissues.</text>
</comment>
<comment type="tissue specificity">
    <text evidence="4">Expressed in all tissues tested (lung, testis liver, kidney, spleen, heart and skeletal muscle). Highest levels in lung and spleen, lowest levels in liver and skeletal muscle.</text>
</comment>
<comment type="PTM">
    <text evidence="1">N- and O-glycosylated.</text>
</comment>